<protein>
    <recommendedName>
        <fullName evidence="10">NAC domain-containing protein 48</fullName>
        <shortName evidence="10">ONAC048</shortName>
    </recommendedName>
    <alternativeName>
        <fullName evidence="9">OsNAC6</fullName>
    </alternativeName>
    <alternativeName>
        <fullName evidence="11">Protein STRESS-RESPONSIVE NAC 2</fullName>
    </alternativeName>
</protein>
<sequence length="303" mass="32907">MSGGQDLQLPPGFRFHPTDEELVMHYLCRRCAGLPIAVPIIAEIDLYKFDPWQLPRMALYGEKEWYFFSPRDRKYPNGSRPNRAAGSGYWKATGADKPVGSPKPVAIKKALVFYAGKAPKGEKTNWIMHEYRLADVDRSARKKNSLRLDDWVLCRIYNKKGGLEKPPAAAVAAAGMVSSGGGVQRKPMVGVNAAVSSPPEQKPVVAGPAFPDLAAYYDRPSDSMPRLHADSSCSEQVLSPEFACEVQSQPKISEWERTFATVGPINPAASILDPAGSGGLGGLGGGGSDPLLQDILMYWGKPF</sequence>
<keyword id="KW-0010">Activator</keyword>
<keyword id="KW-0238">DNA-binding</keyword>
<keyword id="KW-0341">Growth regulation</keyword>
<keyword id="KW-0539">Nucleus</keyword>
<keyword id="KW-1185">Reference proteome</keyword>
<keyword id="KW-0346">Stress response</keyword>
<keyword id="KW-0804">Transcription</keyword>
<keyword id="KW-0805">Transcription regulation</keyword>
<organism>
    <name type="scientific">Oryza sativa subsp. japonica</name>
    <name type="common">Rice</name>
    <dbReference type="NCBI Taxonomy" id="39947"/>
    <lineage>
        <taxon>Eukaryota</taxon>
        <taxon>Viridiplantae</taxon>
        <taxon>Streptophyta</taxon>
        <taxon>Embryophyta</taxon>
        <taxon>Tracheophyta</taxon>
        <taxon>Spermatophyta</taxon>
        <taxon>Magnoliopsida</taxon>
        <taxon>Liliopsida</taxon>
        <taxon>Poales</taxon>
        <taxon>Poaceae</taxon>
        <taxon>BOP clade</taxon>
        <taxon>Oryzoideae</taxon>
        <taxon>Oryzeae</taxon>
        <taxon>Oryzinae</taxon>
        <taxon>Oryza</taxon>
        <taxon>Oryza sativa</taxon>
    </lineage>
</organism>
<gene>
    <name evidence="10" type="primary">NAC048</name>
    <name evidence="9" type="synonym">NAC6</name>
    <name evidence="11" type="synonym">SNAC2</name>
    <name evidence="14" type="ordered locus">Os01g0884300</name>
    <name evidence="12" type="ordered locus">LOC_Os01g66120</name>
    <name evidence="13" type="ORF">B1065E10.51</name>
    <name evidence="15" type="ORF">OsJ_04317</name>
</gene>
<comment type="function">
    <text evidence="4 5 6 7 8">Transcription activator that binds to the promoter of the stress response gene LEA19. Involved in tolerance to abiotic stresses (PubMed:20632034). Transcription activator involved in response to abiotic and biotic stresses. Involved in drought and salt stress responses, and defense response to the rice blast fungus (PubMed:17587305). Transcription activator involved tolerance to cold and salt stresses (PubMed:18273684). Transcription activator involved in tolerance to drought stress. Targets directly and activates genes involved in membrane modification, nicotianamine (NA) biosynthesis, glutathione relocation, accumulation of phosphoadenosine phosphosulfate and glycosylation in roots (PubMed:27892643). Controls root growth at early vegetative stage through chromatin modification and histone lysine deacytaltion by HDAC1 (PubMed:19453457).</text>
</comment>
<comment type="subunit">
    <text evidence="7">Interacts with NAC071.</text>
</comment>
<comment type="subcellular location">
    <subcellularLocation>
        <location evidence="1 4 5 7">Nucleus</location>
    </subcellularLocation>
</comment>
<comment type="tissue specificity">
    <text evidence="2">Widely expressed.</text>
</comment>
<comment type="induction">
    <text evidence="3 7 8">Induced by drought stress, salt stress, cold stress and abscisic acid (ABA) (PubMed:20632034, PubMed:27892643). Induced by methyl jasmonate (PubMed:11332734, PubMed:20632034). Induced by infection with the rice blast fungus Magnaporthe oryzae (PubMed:11332734).</text>
</comment>
<comment type="domain">
    <text evidence="1">The NAC domain includes a DNA binding domain and a dimerization domain.</text>
</comment>
<comment type="disruption phenotype">
    <text evidence="6">Increased root length in young seedlings.</text>
</comment>
<comment type="miscellaneous">
    <text evidence="4 5 7 8">Plants overexpressing NAC048 exhibit growth retardation (PubMed:17587305, PubMed:20632034). Plants overexpressing NAC048 exhibit improved tolerance to drought stress (PubMed:17587305, PubMed:27892643). Plants overexpressing NAC048 show increased tolerance to salt stress (PubMed:17587305, PubMed:18273684). Plants overexpressing NAC048 exhibit increased tolerance to cold stress (PubMed:18273684). Plants overexpressing NAC048 show increased resistance to rice blast fungus (PubMed:17587305).</text>
</comment>
<evidence type="ECO:0000255" key="1">
    <source>
        <dbReference type="PROSITE-ProRule" id="PRU00353"/>
    </source>
</evidence>
<evidence type="ECO:0000269" key="2">
    <source>
    </source>
</evidence>
<evidence type="ECO:0000269" key="3">
    <source>
    </source>
</evidence>
<evidence type="ECO:0000269" key="4">
    <source>
    </source>
</evidence>
<evidence type="ECO:0000269" key="5">
    <source>
    </source>
</evidence>
<evidence type="ECO:0000269" key="6">
    <source>
    </source>
</evidence>
<evidence type="ECO:0000269" key="7">
    <source>
    </source>
</evidence>
<evidence type="ECO:0000269" key="8">
    <source>
    </source>
</evidence>
<evidence type="ECO:0000303" key="9">
    <source>
    </source>
</evidence>
<evidence type="ECO:0000303" key="10">
    <source>
    </source>
</evidence>
<evidence type="ECO:0000303" key="11">
    <source>
    </source>
</evidence>
<evidence type="ECO:0000305" key="12"/>
<evidence type="ECO:0000312" key="13">
    <source>
        <dbReference type="EMBL" id="BAB90381.1"/>
    </source>
</evidence>
<evidence type="ECO:0000312" key="14">
    <source>
        <dbReference type="EMBL" id="BAS75586.1"/>
    </source>
</evidence>
<evidence type="ECO:0000312" key="15">
    <source>
        <dbReference type="EMBL" id="EAZ14398.1"/>
    </source>
</evidence>
<proteinExistence type="evidence at protein level"/>
<accession>Q7F2L3</accession>
<accession>A3A0A1</accession>
<accession>Q0JH48</accession>
<accession>Q9MBC4</accession>
<dbReference type="EMBL" id="AB028185">
    <property type="protein sequence ID" value="BAA89800.1"/>
    <property type="molecule type" value="mRNA"/>
</dbReference>
<dbReference type="EMBL" id="AF254558">
    <property type="protein sequence ID" value="AAK17067.1"/>
    <property type="molecule type" value="Genomic_DNA"/>
</dbReference>
<dbReference type="EMBL" id="EU846993">
    <property type="protein sequence ID" value="ACJ54897.1"/>
    <property type="molecule type" value="mRNA"/>
</dbReference>
<dbReference type="EMBL" id="AP003561">
    <property type="protein sequence ID" value="BAB90381.1"/>
    <property type="molecule type" value="Genomic_DNA"/>
</dbReference>
<dbReference type="EMBL" id="AP008207">
    <property type="protein sequence ID" value="BAF06930.1"/>
    <property type="molecule type" value="Genomic_DNA"/>
</dbReference>
<dbReference type="EMBL" id="AP014957">
    <property type="protein sequence ID" value="BAS75586.1"/>
    <property type="molecule type" value="Genomic_DNA"/>
</dbReference>
<dbReference type="EMBL" id="CM000138">
    <property type="protein sequence ID" value="EAZ14398.1"/>
    <property type="molecule type" value="Genomic_DNA"/>
</dbReference>
<dbReference type="EMBL" id="AK068392">
    <property type="protein sequence ID" value="BAG90892.1"/>
    <property type="molecule type" value="mRNA"/>
</dbReference>
<dbReference type="PIR" id="T52345">
    <property type="entry name" value="T52345"/>
</dbReference>
<dbReference type="RefSeq" id="XP_015620920.1">
    <property type="nucleotide sequence ID" value="XM_015765434.1"/>
</dbReference>
<dbReference type="SMR" id="Q7F2L3"/>
<dbReference type="FunCoup" id="Q7F2L3">
    <property type="interactions" value="1886"/>
</dbReference>
<dbReference type="STRING" id="39947.Q7F2L3"/>
<dbReference type="MetOSite" id="Q7F2L3"/>
<dbReference type="PaxDb" id="39947-Q7F2L3"/>
<dbReference type="EnsemblPlants" id="Os01t0884300-01">
    <property type="protein sequence ID" value="Os01t0884300-01"/>
    <property type="gene ID" value="Os01g0884300"/>
</dbReference>
<dbReference type="Gramene" id="Os01t0884300-01">
    <property type="protein sequence ID" value="Os01t0884300-01"/>
    <property type="gene ID" value="Os01g0884300"/>
</dbReference>
<dbReference type="KEGG" id="dosa:Os01g0884300"/>
<dbReference type="eggNOG" id="ENOG502QVRF">
    <property type="taxonomic scope" value="Eukaryota"/>
</dbReference>
<dbReference type="HOGENOM" id="CLU_035664_3_1_1"/>
<dbReference type="InParanoid" id="Q7F2L3"/>
<dbReference type="OMA" id="VERKPMV"/>
<dbReference type="OrthoDB" id="1921961at2759"/>
<dbReference type="Proteomes" id="UP000000763">
    <property type="component" value="Chromosome 1"/>
</dbReference>
<dbReference type="Proteomes" id="UP000007752">
    <property type="component" value="Chromosome 1"/>
</dbReference>
<dbReference type="Proteomes" id="UP000059680">
    <property type="component" value="Chromosome 1"/>
</dbReference>
<dbReference type="GO" id="GO:0005634">
    <property type="term" value="C:nucleus"/>
    <property type="evidence" value="ECO:0000314"/>
    <property type="project" value="UniProtKB"/>
</dbReference>
<dbReference type="GO" id="GO:0043565">
    <property type="term" value="F:sequence-specific DNA binding"/>
    <property type="evidence" value="ECO:0000314"/>
    <property type="project" value="UniProtKB"/>
</dbReference>
<dbReference type="GO" id="GO:0045893">
    <property type="term" value="P:positive regulation of DNA-templated transcription"/>
    <property type="evidence" value="ECO:0000314"/>
    <property type="project" value="UniProtKB"/>
</dbReference>
<dbReference type="GO" id="GO:1901002">
    <property type="term" value="P:positive regulation of response to salt stress"/>
    <property type="evidence" value="ECO:0000315"/>
    <property type="project" value="UniProtKB"/>
</dbReference>
<dbReference type="GO" id="GO:1902584">
    <property type="term" value="P:positive regulation of response to water deprivation"/>
    <property type="evidence" value="ECO:0000315"/>
    <property type="project" value="UniProtKB"/>
</dbReference>
<dbReference type="GO" id="GO:1900150">
    <property type="term" value="P:regulation of defense response to fungus"/>
    <property type="evidence" value="ECO:0000315"/>
    <property type="project" value="UniProtKB"/>
</dbReference>
<dbReference type="GO" id="GO:0009409">
    <property type="term" value="P:response to cold"/>
    <property type="evidence" value="ECO:0000315"/>
    <property type="project" value="UniProtKB"/>
</dbReference>
<dbReference type="GO" id="GO:0048364">
    <property type="term" value="P:root development"/>
    <property type="evidence" value="ECO:0000315"/>
    <property type="project" value="UniProtKB"/>
</dbReference>
<dbReference type="FunFam" id="2.170.150.80:FF:000004">
    <property type="entry name" value="NAC transcription factor"/>
    <property type="match status" value="1"/>
</dbReference>
<dbReference type="Gene3D" id="2.170.150.80">
    <property type="entry name" value="NAC domain"/>
    <property type="match status" value="1"/>
</dbReference>
<dbReference type="InterPro" id="IPR003441">
    <property type="entry name" value="NAC-dom"/>
</dbReference>
<dbReference type="InterPro" id="IPR036093">
    <property type="entry name" value="NAC_dom_sf"/>
</dbReference>
<dbReference type="PANTHER" id="PTHR31719:SF233">
    <property type="entry name" value="NAC DOMAIN-CONTAINING PROTEIN 48"/>
    <property type="match status" value="1"/>
</dbReference>
<dbReference type="PANTHER" id="PTHR31719">
    <property type="entry name" value="NAC TRANSCRIPTION FACTOR 56"/>
    <property type="match status" value="1"/>
</dbReference>
<dbReference type="Pfam" id="PF02365">
    <property type="entry name" value="NAM"/>
    <property type="match status" value="1"/>
</dbReference>
<dbReference type="SUPFAM" id="SSF101941">
    <property type="entry name" value="NAC domain"/>
    <property type="match status" value="1"/>
</dbReference>
<dbReference type="PROSITE" id="PS51005">
    <property type="entry name" value="NAC"/>
    <property type="match status" value="1"/>
</dbReference>
<name>NAC48_ORYSJ</name>
<feature type="chain" id="PRO_0000132317" description="NAC domain-containing protein 48">
    <location>
        <begin position="1"/>
        <end position="303"/>
    </location>
</feature>
<feature type="domain" description="NAC" evidence="1">
    <location>
        <begin position="9"/>
        <end position="159"/>
    </location>
</feature>
<feature type="sequence conflict" description="In Ref. 8; EAZ14398." evidence="12" ref="8">
    <original>S</original>
    <variation>R</variation>
    <location>
        <position position="288"/>
    </location>
</feature>
<feature type="sequence conflict" description="In Ref. 8; EAZ14398." evidence="12" ref="8">
    <original>D</original>
    <variation>E</variation>
    <location>
        <position position="294"/>
    </location>
</feature>
<reference key="1">
    <citation type="journal article" date="2000" name="Mol. Gen. Genet.">
        <title>Molecular analysis of the NAC gene family in rice.</title>
        <authorList>
            <person name="Kikuchi K."/>
            <person name="Ueguchi-Tanaka M."/>
            <person name="Yoshida K.T."/>
            <person name="Nagato Y."/>
            <person name="Matsusoka M."/>
            <person name="Hirano H.-Y."/>
        </authorList>
    </citation>
    <scope>NUCLEOTIDE SEQUENCE [MRNA]</scope>
    <scope>TISSUE SPECIFICITY</scope>
</reference>
<reference key="2">
    <citation type="submission" date="2000-04" db="EMBL/GenBank/DDBJ databases">
        <title>Molecular cloning of NAC6 gene in rice.</title>
        <authorList>
            <person name="Yoon U.-H."/>
            <person name="Hahn J.-H."/>
            <person name="Eun M.-Y."/>
        </authorList>
    </citation>
    <scope>NUCLEOTIDE SEQUENCE [GENOMIC DNA]</scope>
    <source>
        <strain>cv. Nipponbare</strain>
    </source>
</reference>
<reference key="3">
    <citation type="submission" date="2008-06" db="EMBL/GenBank/DDBJ databases">
        <title>Molecular cloning of NAC6 gene in rice.</title>
        <authorList>
            <person name="Yoon U.H."/>
            <person name="Kim Y.H."/>
        </authorList>
    </citation>
    <scope>NUCLEOTIDE SEQUENCE [MRNA]</scope>
</reference>
<reference key="4">
    <citation type="journal article" date="2002" name="Nature">
        <title>The genome sequence and structure of rice chromosome 1.</title>
        <authorList>
            <person name="Sasaki T."/>
            <person name="Matsumoto T."/>
            <person name="Yamamoto K."/>
            <person name="Sakata K."/>
            <person name="Baba T."/>
            <person name="Katayose Y."/>
            <person name="Wu J."/>
            <person name="Niimura Y."/>
            <person name="Cheng Z."/>
            <person name="Nagamura Y."/>
            <person name="Antonio B.A."/>
            <person name="Kanamori H."/>
            <person name="Hosokawa S."/>
            <person name="Masukawa M."/>
            <person name="Arikawa K."/>
            <person name="Chiden Y."/>
            <person name="Hayashi M."/>
            <person name="Okamoto M."/>
            <person name="Ando T."/>
            <person name="Aoki H."/>
            <person name="Arita K."/>
            <person name="Hamada M."/>
            <person name="Harada C."/>
            <person name="Hijishita S."/>
            <person name="Honda M."/>
            <person name="Ichikawa Y."/>
            <person name="Idonuma A."/>
            <person name="Iijima M."/>
            <person name="Ikeda M."/>
            <person name="Ikeno M."/>
            <person name="Ito S."/>
            <person name="Ito T."/>
            <person name="Ito Y."/>
            <person name="Ito Y."/>
            <person name="Iwabuchi A."/>
            <person name="Kamiya K."/>
            <person name="Karasawa W."/>
            <person name="Katagiri S."/>
            <person name="Kikuta A."/>
            <person name="Kobayashi N."/>
            <person name="Kono I."/>
            <person name="Machita K."/>
            <person name="Maehara T."/>
            <person name="Mizuno H."/>
            <person name="Mizubayashi T."/>
            <person name="Mukai Y."/>
            <person name="Nagasaki H."/>
            <person name="Nakashima M."/>
            <person name="Nakama Y."/>
            <person name="Nakamichi Y."/>
            <person name="Nakamura M."/>
            <person name="Namiki N."/>
            <person name="Negishi M."/>
            <person name="Ohta I."/>
            <person name="Ono N."/>
            <person name="Saji S."/>
            <person name="Sakai K."/>
            <person name="Shibata M."/>
            <person name="Shimokawa T."/>
            <person name="Shomura A."/>
            <person name="Song J."/>
            <person name="Takazaki Y."/>
            <person name="Terasawa K."/>
            <person name="Tsuji K."/>
            <person name="Waki K."/>
            <person name="Yamagata H."/>
            <person name="Yamane H."/>
            <person name="Yoshiki S."/>
            <person name="Yoshihara R."/>
            <person name="Yukawa K."/>
            <person name="Zhong H."/>
            <person name="Iwama H."/>
            <person name="Endo T."/>
            <person name="Ito H."/>
            <person name="Hahn J.H."/>
            <person name="Kim H.-I."/>
            <person name="Eun M.-Y."/>
            <person name="Yano M."/>
            <person name="Jiang J."/>
            <person name="Gojobori T."/>
        </authorList>
    </citation>
    <scope>NUCLEOTIDE SEQUENCE [LARGE SCALE GENOMIC DNA]</scope>
    <source>
        <strain>cv. Nipponbare</strain>
    </source>
</reference>
<reference key="5">
    <citation type="journal article" date="2005" name="Nature">
        <title>The map-based sequence of the rice genome.</title>
        <authorList>
            <consortium name="International rice genome sequencing project (IRGSP)"/>
        </authorList>
    </citation>
    <scope>NUCLEOTIDE SEQUENCE [LARGE SCALE GENOMIC DNA]</scope>
    <source>
        <strain>cv. Nipponbare</strain>
    </source>
</reference>
<reference key="6">
    <citation type="journal article" date="2008" name="Nucleic Acids Res.">
        <title>The rice annotation project database (RAP-DB): 2008 update.</title>
        <authorList>
            <consortium name="The rice annotation project (RAP)"/>
        </authorList>
    </citation>
    <scope>GENOME REANNOTATION</scope>
    <source>
        <strain>cv. Nipponbare</strain>
    </source>
</reference>
<reference key="7">
    <citation type="journal article" date="2013" name="Rice">
        <title>Improvement of the Oryza sativa Nipponbare reference genome using next generation sequence and optical map data.</title>
        <authorList>
            <person name="Kawahara Y."/>
            <person name="de la Bastide M."/>
            <person name="Hamilton J.P."/>
            <person name="Kanamori H."/>
            <person name="McCombie W.R."/>
            <person name="Ouyang S."/>
            <person name="Schwartz D.C."/>
            <person name="Tanaka T."/>
            <person name="Wu J."/>
            <person name="Zhou S."/>
            <person name="Childs K.L."/>
            <person name="Davidson R.M."/>
            <person name="Lin H."/>
            <person name="Quesada-Ocampo L."/>
            <person name="Vaillancourt B."/>
            <person name="Sakai H."/>
            <person name="Lee S.S."/>
            <person name="Kim J."/>
            <person name="Numa H."/>
            <person name="Itoh T."/>
            <person name="Buell C.R."/>
            <person name="Matsumoto T."/>
        </authorList>
    </citation>
    <scope>GENOME REANNOTATION</scope>
    <source>
        <strain>cv. Nipponbare</strain>
    </source>
</reference>
<reference key="8">
    <citation type="journal article" date="2005" name="PLoS Biol.">
        <title>The genomes of Oryza sativa: a history of duplications.</title>
        <authorList>
            <person name="Yu J."/>
            <person name="Wang J."/>
            <person name="Lin W."/>
            <person name="Li S."/>
            <person name="Li H."/>
            <person name="Zhou J."/>
            <person name="Ni P."/>
            <person name="Dong W."/>
            <person name="Hu S."/>
            <person name="Zeng C."/>
            <person name="Zhang J."/>
            <person name="Zhang Y."/>
            <person name="Li R."/>
            <person name="Xu Z."/>
            <person name="Li S."/>
            <person name="Li X."/>
            <person name="Zheng H."/>
            <person name="Cong L."/>
            <person name="Lin L."/>
            <person name="Yin J."/>
            <person name="Geng J."/>
            <person name="Li G."/>
            <person name="Shi J."/>
            <person name="Liu J."/>
            <person name="Lv H."/>
            <person name="Li J."/>
            <person name="Wang J."/>
            <person name="Deng Y."/>
            <person name="Ran L."/>
            <person name="Shi X."/>
            <person name="Wang X."/>
            <person name="Wu Q."/>
            <person name="Li C."/>
            <person name="Ren X."/>
            <person name="Wang J."/>
            <person name="Wang X."/>
            <person name="Li D."/>
            <person name="Liu D."/>
            <person name="Zhang X."/>
            <person name="Ji Z."/>
            <person name="Zhao W."/>
            <person name="Sun Y."/>
            <person name="Zhang Z."/>
            <person name="Bao J."/>
            <person name="Han Y."/>
            <person name="Dong L."/>
            <person name="Ji J."/>
            <person name="Chen P."/>
            <person name="Wu S."/>
            <person name="Liu J."/>
            <person name="Xiao Y."/>
            <person name="Bu D."/>
            <person name="Tan J."/>
            <person name="Yang L."/>
            <person name="Ye C."/>
            <person name="Zhang J."/>
            <person name="Xu J."/>
            <person name="Zhou Y."/>
            <person name="Yu Y."/>
            <person name="Zhang B."/>
            <person name="Zhuang S."/>
            <person name="Wei H."/>
            <person name="Liu B."/>
            <person name="Lei M."/>
            <person name="Yu H."/>
            <person name="Li Y."/>
            <person name="Xu H."/>
            <person name="Wei S."/>
            <person name="He X."/>
            <person name="Fang L."/>
            <person name="Zhang Z."/>
            <person name="Zhang Y."/>
            <person name="Huang X."/>
            <person name="Su Z."/>
            <person name="Tong W."/>
            <person name="Li J."/>
            <person name="Tong Z."/>
            <person name="Li S."/>
            <person name="Ye J."/>
            <person name="Wang L."/>
            <person name="Fang L."/>
            <person name="Lei T."/>
            <person name="Chen C.-S."/>
            <person name="Chen H.-C."/>
            <person name="Xu Z."/>
            <person name="Li H."/>
            <person name="Huang H."/>
            <person name="Zhang F."/>
            <person name="Xu H."/>
            <person name="Li N."/>
            <person name="Zhao C."/>
            <person name="Li S."/>
            <person name="Dong L."/>
            <person name="Huang Y."/>
            <person name="Li L."/>
            <person name="Xi Y."/>
            <person name="Qi Q."/>
            <person name="Li W."/>
            <person name="Zhang B."/>
            <person name="Hu W."/>
            <person name="Zhang Y."/>
            <person name="Tian X."/>
            <person name="Jiao Y."/>
            <person name="Liang X."/>
            <person name="Jin J."/>
            <person name="Gao L."/>
            <person name="Zheng W."/>
            <person name="Hao B."/>
            <person name="Liu S.-M."/>
            <person name="Wang W."/>
            <person name="Yuan L."/>
            <person name="Cao M."/>
            <person name="McDermott J."/>
            <person name="Samudrala R."/>
            <person name="Wang J."/>
            <person name="Wong G.K.-S."/>
            <person name="Yang H."/>
        </authorList>
    </citation>
    <scope>NUCLEOTIDE SEQUENCE [LARGE SCALE GENOMIC DNA]</scope>
    <source>
        <strain>cv. Nipponbare</strain>
    </source>
</reference>
<reference key="9">
    <citation type="journal article" date="2003" name="Science">
        <title>Collection, mapping, and annotation of over 28,000 cDNA clones from japonica rice.</title>
        <authorList>
            <consortium name="The rice full-length cDNA consortium"/>
        </authorList>
    </citation>
    <scope>NUCLEOTIDE SEQUENCE [LARGE SCALE MRNA]</scope>
    <source>
        <strain>cv. Nipponbare</strain>
    </source>
</reference>
<reference key="10">
    <citation type="journal article" date="2001" name="Mol. Plant Microbe Interact.">
        <title>Identification of defense-related rice genes by suppression subtractive hybridization and differential screening.</title>
        <authorList>
            <person name="Xiong L."/>
            <person name="Lee M.W."/>
            <person name="Qi M."/>
            <person name="Yang Y."/>
        </authorList>
    </citation>
    <scope>INDUCTION</scope>
</reference>
<reference key="11">
    <citation type="journal article" date="2003" name="DNA Res.">
        <title>Comprehensive analysis of NAC family genes in Oryza sativa and Arabidopsis thaliana.</title>
        <authorList>
            <person name="Ooka H."/>
            <person name="Satoh K."/>
            <person name="Doi K."/>
            <person name="Nagata T."/>
            <person name="Otomo Y."/>
            <person name="Murakami K."/>
            <person name="Matsubara K."/>
            <person name="Osato N."/>
            <person name="Kawai J."/>
            <person name="Carninci P."/>
            <person name="Hayashizaki Y."/>
            <person name="Suzuki K."/>
            <person name="Kojima K."/>
            <person name="Takahara Y."/>
            <person name="Yamamoto K."/>
            <person name="Kikuchi S."/>
        </authorList>
    </citation>
    <scope>GENE FAMILY</scope>
    <scope>NOMENCLATURE</scope>
</reference>
<reference key="12">
    <citation type="journal article" date="2007" name="Plant J.">
        <title>Functional analysis of a NAC-type transcription factor OsNAC6 involved in abiotic and biotic stress-responsive gene expression in rice.</title>
        <authorList>
            <person name="Nakashima K."/>
            <person name="Tran L.S."/>
            <person name="Van Nguyen D."/>
            <person name="Fujita M."/>
            <person name="Maruyama K."/>
            <person name="Todaka D."/>
            <person name="Ito Y."/>
            <person name="Hayashi N."/>
            <person name="Shinozaki K."/>
            <person name="Yamaguchi-Shinozaki K."/>
        </authorList>
    </citation>
    <scope>FUNCTION</scope>
    <scope>SUBCELLULAR LOCATION</scope>
</reference>
<reference key="13">
    <citation type="journal article" date="2008" name="Plant Mol. Biol.">
        <title>Characterization of transcription factor gene SNAC2 conferring cold and salt tolerance in rice.</title>
        <authorList>
            <person name="Hu H."/>
            <person name="You J."/>
            <person name="Fang Y."/>
            <person name="Zhu X."/>
            <person name="Qi Z."/>
            <person name="Xiong L."/>
        </authorList>
    </citation>
    <scope>FUNCTION</scope>
    <scope>SUBCELLULAR LOCATION</scope>
</reference>
<reference key="14">
    <citation type="journal article" date="2009" name="Plant J.">
        <title>The histone deacetylase OsHDAC1 epigenetically regulates the OsNAC6 gene that controls seedling root growth in rice.</title>
        <authorList>
            <person name="Chung P.J."/>
            <person name="Kim Y.S."/>
            <person name="Jeong J.S."/>
            <person name="Park S.H."/>
            <person name="Nahm B.H."/>
            <person name="Kim J.K."/>
        </authorList>
    </citation>
    <scope>FUNCTION</scope>
    <scope>DISRUPTION PHENOTYPE</scope>
</reference>
<reference key="15">
    <citation type="journal article" date="2010" name="Mol. Genet. Genomics">
        <title>The abiotic stress-responsive NAC-type transcription factor OsNAC5 regulates stress-inducible genes and stress tolerance in rice.</title>
        <authorList>
            <person name="Takasaki H."/>
            <person name="Maruyama K."/>
            <person name="Kidokoro S."/>
            <person name="Ito Y."/>
            <person name="Fujita Y."/>
            <person name="Shinozaki K."/>
            <person name="Yamaguchi-Shinozaki K."/>
            <person name="Nakashima K."/>
        </authorList>
    </citation>
    <scope>FUNCTION</scope>
    <scope>INTERACTION WITH NAC071</scope>
    <scope>SUBCELLULAR LOCATION</scope>
    <scope>INDUCTION</scope>
</reference>
<reference key="16">
    <citation type="journal article" date="2017" name="Plant Biotechnol. J.">
        <title>The rice OsNAC6 transcription factor orchestrates multiple molecular mechanisms involving root structural adaptions and nicotianamine biosynthesis for drought tolerance.</title>
        <authorList>
            <person name="Lee D.K."/>
            <person name="Chung P.J."/>
            <person name="Jeong J.S."/>
            <person name="Jang G."/>
            <person name="Bang S.W."/>
            <person name="Jung H."/>
            <person name="Kim Y.S."/>
            <person name="Ha S.H."/>
            <person name="Choi Y.D."/>
            <person name="Kim J.K."/>
        </authorList>
    </citation>
    <scope>FUNCTION</scope>
    <scope>INDUCTION</scope>
</reference>